<evidence type="ECO:0000255" key="1">
    <source>
        <dbReference type="HAMAP-Rule" id="MF_00333"/>
    </source>
</evidence>
<keyword id="KW-0963">Cytoplasm</keyword>
<keyword id="KW-0350">Heme biosynthesis</keyword>
<keyword id="KW-0479">Metal-binding</keyword>
<keyword id="KW-0560">Oxidoreductase</keyword>
<keyword id="KW-0627">Porphyrin biosynthesis</keyword>
<sequence length="279" mass="31932">MNKKNREVTSSWFTNLRDLVCAEFEKIEEEYAKAKGLKPGKFVRSSWERDGGGGGVMSVMKGKVFEKVGVNISTVFGEFSKAFRAEIPGAELDGKFFATGISLVAHLKSPLIPAMHFNTRYIETSKNWFGGGGDLTPFYPEEDETAKFHAAFKEACDKYDSGYYPKFKKQCDEYFYLKHRKEPRGVGGIFYDYLNSGNFEQDFSFTQDVGKALLSVYPEIVRNKLFLPWTDEQKEYQLIRRGRYVEFNLLYDRGTKFGLMTDGNVEAILMSLPPEVKWA</sequence>
<protein>
    <recommendedName>
        <fullName evidence="1">Oxygen-dependent coproporphyrinogen-III oxidase</fullName>
        <shortName evidence="1">CPO</shortName>
        <shortName evidence="1">Coprogen oxidase</shortName>
        <shortName evidence="1">Coproporphyrinogenase</shortName>
        <ecNumber evidence="1">1.3.3.3</ecNumber>
    </recommendedName>
</protein>
<gene>
    <name evidence="1" type="primary">hemF</name>
    <name type="ordered locus">RBE_1380</name>
</gene>
<accession>Q1RGQ3</accession>
<feature type="chain" id="PRO_0000277929" description="Oxygen-dependent coproporphyrinogen-III oxidase">
    <location>
        <begin position="1"/>
        <end position="279"/>
    </location>
</feature>
<feature type="region of interest" description="Important for dimerization" evidence="1">
    <location>
        <begin position="244"/>
        <end position="279"/>
    </location>
</feature>
<feature type="active site" description="Proton donor" evidence="1">
    <location>
        <position position="116"/>
    </location>
</feature>
<feature type="binding site" evidence="1">
    <location>
        <position position="102"/>
    </location>
    <ligand>
        <name>substrate</name>
    </ligand>
</feature>
<feature type="binding site" evidence="1">
    <location>
        <position position="106"/>
    </location>
    <ligand>
        <name>a divalent metal cation</name>
        <dbReference type="ChEBI" id="CHEBI:60240"/>
    </ligand>
</feature>
<feature type="binding site" evidence="1">
    <location>
        <position position="116"/>
    </location>
    <ligand>
        <name>a divalent metal cation</name>
        <dbReference type="ChEBI" id="CHEBI:60240"/>
    </ligand>
</feature>
<feature type="binding site" evidence="1">
    <location>
        <begin position="118"/>
        <end position="120"/>
    </location>
    <ligand>
        <name>substrate</name>
    </ligand>
</feature>
<feature type="binding site" evidence="1">
    <location>
        <position position="149"/>
    </location>
    <ligand>
        <name>a divalent metal cation</name>
        <dbReference type="ChEBI" id="CHEBI:60240"/>
    </ligand>
</feature>
<feature type="binding site" evidence="1">
    <location>
        <position position="179"/>
    </location>
    <ligand>
        <name>a divalent metal cation</name>
        <dbReference type="ChEBI" id="CHEBI:60240"/>
    </ligand>
</feature>
<feature type="site" description="Important for dimerization" evidence="1">
    <location>
        <position position="179"/>
    </location>
</feature>
<comment type="function">
    <text evidence="1">Involved in the heme biosynthesis. Catalyzes the aerobic oxidative decarboxylation of propionate groups of rings A and B of coproporphyrinogen-III to yield the vinyl groups in protoporphyrinogen-IX.</text>
</comment>
<comment type="catalytic activity">
    <reaction evidence="1">
        <text>coproporphyrinogen III + O2 + 2 H(+) = protoporphyrinogen IX + 2 CO2 + 2 H2O</text>
        <dbReference type="Rhea" id="RHEA:18257"/>
        <dbReference type="ChEBI" id="CHEBI:15377"/>
        <dbReference type="ChEBI" id="CHEBI:15378"/>
        <dbReference type="ChEBI" id="CHEBI:15379"/>
        <dbReference type="ChEBI" id="CHEBI:16526"/>
        <dbReference type="ChEBI" id="CHEBI:57307"/>
        <dbReference type="ChEBI" id="CHEBI:57309"/>
        <dbReference type="EC" id="1.3.3.3"/>
    </reaction>
</comment>
<comment type="cofactor">
    <cofactor evidence="1">
        <name>a divalent metal cation</name>
        <dbReference type="ChEBI" id="CHEBI:60240"/>
    </cofactor>
</comment>
<comment type="pathway">
    <text evidence="1">Porphyrin-containing compound metabolism; protoporphyrin-IX biosynthesis; protoporphyrinogen-IX from coproporphyrinogen-III (O2 route): step 1/1.</text>
</comment>
<comment type="subunit">
    <text evidence="1">Homodimer.</text>
</comment>
<comment type="subcellular location">
    <subcellularLocation>
        <location evidence="1">Cytoplasm</location>
    </subcellularLocation>
</comment>
<comment type="similarity">
    <text evidence="1">Belongs to the aerobic coproporphyrinogen-III oxidase family.</text>
</comment>
<proteinExistence type="inferred from homology"/>
<organism>
    <name type="scientific">Rickettsia bellii (strain RML369-C)</name>
    <dbReference type="NCBI Taxonomy" id="336407"/>
    <lineage>
        <taxon>Bacteria</taxon>
        <taxon>Pseudomonadati</taxon>
        <taxon>Pseudomonadota</taxon>
        <taxon>Alphaproteobacteria</taxon>
        <taxon>Rickettsiales</taxon>
        <taxon>Rickettsiaceae</taxon>
        <taxon>Rickettsieae</taxon>
        <taxon>Rickettsia</taxon>
        <taxon>belli group</taxon>
    </lineage>
</organism>
<name>HEM6_RICBR</name>
<reference key="1">
    <citation type="journal article" date="2006" name="PLoS Genet.">
        <title>Genome sequence of Rickettsia bellii illuminates the role of amoebae in gene exchanges between intracellular pathogens.</title>
        <authorList>
            <person name="Ogata H."/>
            <person name="La Scola B."/>
            <person name="Audic S."/>
            <person name="Renesto P."/>
            <person name="Blanc G."/>
            <person name="Robert C."/>
            <person name="Fournier P.-E."/>
            <person name="Claverie J.-M."/>
            <person name="Raoult D."/>
        </authorList>
    </citation>
    <scope>NUCLEOTIDE SEQUENCE [LARGE SCALE GENOMIC DNA]</scope>
    <source>
        <strain>RML369-C</strain>
    </source>
</reference>
<dbReference type="EC" id="1.3.3.3" evidence="1"/>
<dbReference type="EMBL" id="CP000087">
    <property type="protein sequence ID" value="ABE05461.1"/>
    <property type="molecule type" value="Genomic_DNA"/>
</dbReference>
<dbReference type="RefSeq" id="WP_011478030.1">
    <property type="nucleotide sequence ID" value="NC_007940.1"/>
</dbReference>
<dbReference type="SMR" id="Q1RGQ3"/>
<dbReference type="KEGG" id="rbe:RBE_1380"/>
<dbReference type="eggNOG" id="COG0408">
    <property type="taxonomic scope" value="Bacteria"/>
</dbReference>
<dbReference type="HOGENOM" id="CLU_026169_0_1_5"/>
<dbReference type="OrthoDB" id="9777553at2"/>
<dbReference type="UniPathway" id="UPA00251">
    <property type="reaction ID" value="UER00322"/>
</dbReference>
<dbReference type="Proteomes" id="UP000001951">
    <property type="component" value="Chromosome"/>
</dbReference>
<dbReference type="GO" id="GO:0005737">
    <property type="term" value="C:cytoplasm"/>
    <property type="evidence" value="ECO:0007669"/>
    <property type="project" value="UniProtKB-SubCell"/>
</dbReference>
<dbReference type="GO" id="GO:0004109">
    <property type="term" value="F:coproporphyrinogen oxidase activity"/>
    <property type="evidence" value="ECO:0007669"/>
    <property type="project" value="UniProtKB-UniRule"/>
</dbReference>
<dbReference type="GO" id="GO:0046872">
    <property type="term" value="F:metal ion binding"/>
    <property type="evidence" value="ECO:0007669"/>
    <property type="project" value="UniProtKB-KW"/>
</dbReference>
<dbReference type="GO" id="GO:0042803">
    <property type="term" value="F:protein homodimerization activity"/>
    <property type="evidence" value="ECO:0000250"/>
    <property type="project" value="UniProtKB"/>
</dbReference>
<dbReference type="GO" id="GO:0006782">
    <property type="term" value="P:protoporphyrinogen IX biosynthetic process"/>
    <property type="evidence" value="ECO:0007669"/>
    <property type="project" value="UniProtKB-UniRule"/>
</dbReference>
<dbReference type="FunFam" id="3.40.1500.10:FF:000005">
    <property type="entry name" value="Oxygen-dependent coproporphyrinogen-III oxidase"/>
    <property type="match status" value="1"/>
</dbReference>
<dbReference type="Gene3D" id="3.40.1500.10">
    <property type="entry name" value="Coproporphyrinogen III oxidase, aerobic"/>
    <property type="match status" value="1"/>
</dbReference>
<dbReference type="HAMAP" id="MF_00333">
    <property type="entry name" value="Coprogen_oxidas"/>
    <property type="match status" value="1"/>
</dbReference>
<dbReference type="InterPro" id="IPR001260">
    <property type="entry name" value="Coprogen_oxidase_aer"/>
</dbReference>
<dbReference type="InterPro" id="IPR036406">
    <property type="entry name" value="Coprogen_oxidase_aer_sf"/>
</dbReference>
<dbReference type="InterPro" id="IPR018375">
    <property type="entry name" value="Coprogen_oxidase_CS"/>
</dbReference>
<dbReference type="NCBIfam" id="NF003727">
    <property type="entry name" value="PRK05330.1"/>
    <property type="match status" value="1"/>
</dbReference>
<dbReference type="PANTHER" id="PTHR10755">
    <property type="entry name" value="COPROPORPHYRINOGEN III OXIDASE, MITOCHONDRIAL"/>
    <property type="match status" value="1"/>
</dbReference>
<dbReference type="PANTHER" id="PTHR10755:SF0">
    <property type="entry name" value="OXYGEN-DEPENDENT COPROPORPHYRINOGEN-III OXIDASE, MITOCHONDRIAL"/>
    <property type="match status" value="1"/>
</dbReference>
<dbReference type="Pfam" id="PF01218">
    <property type="entry name" value="Coprogen_oxidas"/>
    <property type="match status" value="1"/>
</dbReference>
<dbReference type="PIRSF" id="PIRSF000166">
    <property type="entry name" value="Coproporphyri_ox"/>
    <property type="match status" value="1"/>
</dbReference>
<dbReference type="PRINTS" id="PR00073">
    <property type="entry name" value="COPRGNOXDASE"/>
</dbReference>
<dbReference type="SUPFAM" id="SSF102886">
    <property type="entry name" value="Coproporphyrinogen III oxidase"/>
    <property type="match status" value="1"/>
</dbReference>
<dbReference type="PROSITE" id="PS01021">
    <property type="entry name" value="COPROGEN_OXIDASE"/>
    <property type="match status" value="1"/>
</dbReference>